<comment type="function">
    <text evidence="1">Activates CDC42, a member of the Ras-like family of Rho- and Rac proteins, by exchanging bound GDP for free GTP. Mediates VEGF-induced CDC42 activation. May regulate proangiogenic action of VEGF in vascular endothelial cells, including network formation, directional movement and proliferation. May play a role in regulating the actin cytoskeleton and cell shape (By similarity).</text>
</comment>
<comment type="subcellular location">
    <subcellularLocation>
        <location evidence="1">Cytoplasm</location>
        <location evidence="1">Cytoskeleton</location>
    </subcellularLocation>
    <subcellularLocation>
        <location evidence="1">Cell projection</location>
        <location evidence="1">Ruffle membrane</location>
    </subcellularLocation>
    <subcellularLocation>
        <location evidence="1">Endoplasmic reticulum</location>
    </subcellularLocation>
    <subcellularLocation>
        <location evidence="1">Golgi apparatus</location>
    </subcellularLocation>
    <subcellularLocation>
        <location evidence="1">Early endosome</location>
    </subcellularLocation>
    <text evidence="1">In peripheral membrane ruffles, colocalizes with F-actin.</text>
</comment>
<comment type="alternative products">
    <event type="alternative splicing"/>
    <isoform>
        <id>Q80UZ0-1</id>
        <name>1</name>
        <sequence type="displayed"/>
    </isoform>
    <isoform>
        <id>Q80UZ0-2</id>
        <name>2</name>
        <sequence type="described" ref="VSP_013089"/>
    </isoform>
</comment>
<comment type="tissue specificity">
    <text evidence="6">Expressed in highly vascularized tissues, such as lung, kidney and ovary.</text>
</comment>
<comment type="developmental stage">
    <text evidence="6">Detected at 10 dpc in the intersomitic vessels, dorsal aorta and brain vasculature. In retina, strongly expressed in the developing retinal vasculature at postnatal day 4 and down-regulated in preformed vessels at postnatal day 8. Predominantly detected in capillaries and veins, and particularly at the advancing vascular fronts, as compared to arteries.</text>
</comment>
<keyword id="KW-0025">Alternative splicing</keyword>
<keyword id="KW-1003">Cell membrane</keyword>
<keyword id="KW-0966">Cell projection</keyword>
<keyword id="KW-0963">Cytoplasm</keyword>
<keyword id="KW-0206">Cytoskeleton</keyword>
<keyword id="KW-0256">Endoplasmic reticulum</keyword>
<keyword id="KW-0967">Endosome</keyword>
<keyword id="KW-0333">Golgi apparatus</keyword>
<keyword id="KW-0344">Guanine-nucleotide releasing factor</keyword>
<keyword id="KW-0472">Membrane</keyword>
<keyword id="KW-0479">Metal-binding</keyword>
<keyword id="KW-0597">Phosphoprotein</keyword>
<keyword id="KW-1185">Reference proteome</keyword>
<keyword id="KW-0677">Repeat</keyword>
<keyword id="KW-0862">Zinc</keyword>
<keyword id="KW-0863">Zinc-finger</keyword>
<sequence length="1219" mass="134719">MGSPESEVSPDVQEQEAATDNPEVFEEDSADAAEGEDQIEQEEPPNCDEEAYNRDAAAATMQVGEDLGEEGDHVQEDPAEESCQIIPFESDSVEEDFSPTLTENPYEIFPTESTSFCNNTYSLDESANGHEPVCEICVEEVPGVGPPLNQHDSLPDGSGEDSPVVPDVVVVPENEGPVDDALSSPYVMGVGLLSLGEGAQSDTQAASGTLSGYSTWEEGDSEGGQVPVDRKNIATRARPHSGKVAGHVPETVLEETGPETCSSGMGIRDTSDEVRKIGILPEGKPPECVRALPAKPRAFTLYPRSFSVEGRESPLSMFREPEGAGLDSHRVRRKEDNLSLPGAIGSSGSFSQRSHLPSSGTSTPSSVVDIPPPFDLACITKKPITKSSPSLLIDGDTLEKASKKKKSSFKRFLELTFRKKTESKVHVDMNLSSSRSSSESSYHGPARVLELDRRSLSNSPQLKCRTGKLRASDSPAALIFYRDSKRKGVPFSRTVSRVESFEDRSRPPFLPLPLTKPRSISFPNADTSDYENIPAMNSDYENIQIPPRRPVRTGTFTKLFEEQSRALSTANENDGYVDMSSFNAFESKQQSSEQEAESAYTEPYKVCPISAAPREDLTSDEEQGSSEEEDSASRDPSLSHKGEGQSRALVIAQELLSSEKAYVQMLQHLSLDFHGAVLRALENVEQEGREPLAQEELRQGLRELPAICDLHQGILESLEQRLGDCGEGQPQVADIFLAREQEFEHHAAHILQFDRYLGLLAESCLLSPRLATTVREFEQSSQGGGQSMKHRMLRVVQRLFQYQVLLTDYLNNLCPDSAEYDNTQSALTLISKVTDRANESMEQGENLQKLVHIEYSVRGQGDLLQPGREFLKEGTLMRVRGKSRHPRHLFLMNDTLLYTHPQKDGKYRLKSSLPVANMKVSRPVMDKVPYALKIETPESCLTLSASSCAERDEWHYCLSRALPEDYKTQALAAFHHSVEIRERLGISLGERLPTLVPVTHAMMCMNCGCDFSLTVRRHHCHACGKIVCRNCSRNKYPLKCLKNRMAKVCDGCFRELKLRNGPVPGSMRERPVSMSFPLSSSRFSSGSALSSVFQSISPSTFKKQKKVPSALSEVAASGEGSAISGYLSRCKSGKRRWKKLWLVIKGKVLYTYLASEDKVAMESIPLLGFTIAPEKEEGSSEVGPVFHLYHKKTLFYSFKAEDSNSAQRWMEAMEDASVL</sequence>
<reference key="1">
    <citation type="journal article" date="2004" name="Genome Res.">
        <title>The status, quality, and expansion of the NIH full-length cDNA project: the Mammalian Gene Collection (MGC).</title>
        <authorList>
            <consortium name="The MGC Project Team"/>
        </authorList>
    </citation>
    <scope>NUCLEOTIDE SEQUENCE [LARGE SCALE MRNA] (ISOFORM 1)</scope>
    <source>
        <strain>C57BL/6J</strain>
        <strain>FVB/N</strain>
        <tissue>Brain</tissue>
        <tissue>Mammary tumor</tissue>
    </source>
</reference>
<reference key="2">
    <citation type="journal article" date="2005" name="Science">
        <title>The transcriptional landscape of the mammalian genome.</title>
        <authorList>
            <person name="Carninci P."/>
            <person name="Kasukawa T."/>
            <person name="Katayama S."/>
            <person name="Gough J."/>
            <person name="Frith M.C."/>
            <person name="Maeda N."/>
            <person name="Oyama R."/>
            <person name="Ravasi T."/>
            <person name="Lenhard B."/>
            <person name="Wells C."/>
            <person name="Kodzius R."/>
            <person name="Shimokawa K."/>
            <person name="Bajic V.B."/>
            <person name="Brenner S.E."/>
            <person name="Batalov S."/>
            <person name="Forrest A.R."/>
            <person name="Zavolan M."/>
            <person name="Davis M.J."/>
            <person name="Wilming L.G."/>
            <person name="Aidinis V."/>
            <person name="Allen J.E."/>
            <person name="Ambesi-Impiombato A."/>
            <person name="Apweiler R."/>
            <person name="Aturaliya R.N."/>
            <person name="Bailey T.L."/>
            <person name="Bansal M."/>
            <person name="Baxter L."/>
            <person name="Beisel K.W."/>
            <person name="Bersano T."/>
            <person name="Bono H."/>
            <person name="Chalk A.M."/>
            <person name="Chiu K.P."/>
            <person name="Choudhary V."/>
            <person name="Christoffels A."/>
            <person name="Clutterbuck D.R."/>
            <person name="Crowe M.L."/>
            <person name="Dalla E."/>
            <person name="Dalrymple B.P."/>
            <person name="de Bono B."/>
            <person name="Della Gatta G."/>
            <person name="di Bernardo D."/>
            <person name="Down T."/>
            <person name="Engstrom P."/>
            <person name="Fagiolini M."/>
            <person name="Faulkner G."/>
            <person name="Fletcher C.F."/>
            <person name="Fukushima T."/>
            <person name="Furuno M."/>
            <person name="Futaki S."/>
            <person name="Gariboldi M."/>
            <person name="Georgii-Hemming P."/>
            <person name="Gingeras T.R."/>
            <person name="Gojobori T."/>
            <person name="Green R.E."/>
            <person name="Gustincich S."/>
            <person name="Harbers M."/>
            <person name="Hayashi Y."/>
            <person name="Hensch T.K."/>
            <person name="Hirokawa N."/>
            <person name="Hill D."/>
            <person name="Huminiecki L."/>
            <person name="Iacono M."/>
            <person name="Ikeo K."/>
            <person name="Iwama A."/>
            <person name="Ishikawa T."/>
            <person name="Jakt M."/>
            <person name="Kanapin A."/>
            <person name="Katoh M."/>
            <person name="Kawasawa Y."/>
            <person name="Kelso J."/>
            <person name="Kitamura H."/>
            <person name="Kitano H."/>
            <person name="Kollias G."/>
            <person name="Krishnan S.P."/>
            <person name="Kruger A."/>
            <person name="Kummerfeld S.K."/>
            <person name="Kurochkin I.V."/>
            <person name="Lareau L.F."/>
            <person name="Lazarevic D."/>
            <person name="Lipovich L."/>
            <person name="Liu J."/>
            <person name="Liuni S."/>
            <person name="McWilliam S."/>
            <person name="Madan Babu M."/>
            <person name="Madera M."/>
            <person name="Marchionni L."/>
            <person name="Matsuda H."/>
            <person name="Matsuzawa S."/>
            <person name="Miki H."/>
            <person name="Mignone F."/>
            <person name="Miyake S."/>
            <person name="Morris K."/>
            <person name="Mottagui-Tabar S."/>
            <person name="Mulder N."/>
            <person name="Nakano N."/>
            <person name="Nakauchi H."/>
            <person name="Ng P."/>
            <person name="Nilsson R."/>
            <person name="Nishiguchi S."/>
            <person name="Nishikawa S."/>
            <person name="Nori F."/>
            <person name="Ohara O."/>
            <person name="Okazaki Y."/>
            <person name="Orlando V."/>
            <person name="Pang K.C."/>
            <person name="Pavan W.J."/>
            <person name="Pavesi G."/>
            <person name="Pesole G."/>
            <person name="Petrovsky N."/>
            <person name="Piazza S."/>
            <person name="Reed J."/>
            <person name="Reid J.F."/>
            <person name="Ring B.Z."/>
            <person name="Ringwald M."/>
            <person name="Rost B."/>
            <person name="Ruan Y."/>
            <person name="Salzberg S.L."/>
            <person name="Sandelin A."/>
            <person name="Schneider C."/>
            <person name="Schoenbach C."/>
            <person name="Sekiguchi K."/>
            <person name="Semple C.A."/>
            <person name="Seno S."/>
            <person name="Sessa L."/>
            <person name="Sheng Y."/>
            <person name="Shibata Y."/>
            <person name="Shimada H."/>
            <person name="Shimada K."/>
            <person name="Silva D."/>
            <person name="Sinclair B."/>
            <person name="Sperling S."/>
            <person name="Stupka E."/>
            <person name="Sugiura K."/>
            <person name="Sultana R."/>
            <person name="Takenaka Y."/>
            <person name="Taki K."/>
            <person name="Tammoja K."/>
            <person name="Tan S.L."/>
            <person name="Tang S."/>
            <person name="Taylor M.S."/>
            <person name="Tegner J."/>
            <person name="Teichmann S.A."/>
            <person name="Ueda H.R."/>
            <person name="van Nimwegen E."/>
            <person name="Verardo R."/>
            <person name="Wei C.L."/>
            <person name="Yagi K."/>
            <person name="Yamanishi H."/>
            <person name="Zabarovsky E."/>
            <person name="Zhu S."/>
            <person name="Zimmer A."/>
            <person name="Hide W."/>
            <person name="Bult C."/>
            <person name="Grimmond S.M."/>
            <person name="Teasdale R.D."/>
            <person name="Liu E.T."/>
            <person name="Brusic V."/>
            <person name="Quackenbush J."/>
            <person name="Wahlestedt C."/>
            <person name="Mattick J.S."/>
            <person name="Hume D.A."/>
            <person name="Kai C."/>
            <person name="Sasaki D."/>
            <person name="Tomaru Y."/>
            <person name="Fukuda S."/>
            <person name="Kanamori-Katayama M."/>
            <person name="Suzuki M."/>
            <person name="Aoki J."/>
            <person name="Arakawa T."/>
            <person name="Iida J."/>
            <person name="Imamura K."/>
            <person name="Itoh M."/>
            <person name="Kato T."/>
            <person name="Kawaji H."/>
            <person name="Kawagashira N."/>
            <person name="Kawashima T."/>
            <person name="Kojima M."/>
            <person name="Kondo S."/>
            <person name="Konno H."/>
            <person name="Nakano K."/>
            <person name="Ninomiya N."/>
            <person name="Nishio T."/>
            <person name="Okada M."/>
            <person name="Plessy C."/>
            <person name="Shibata K."/>
            <person name="Shiraki T."/>
            <person name="Suzuki S."/>
            <person name="Tagami M."/>
            <person name="Waki K."/>
            <person name="Watahiki A."/>
            <person name="Okamura-Oho Y."/>
            <person name="Suzuki H."/>
            <person name="Kawai J."/>
            <person name="Hayashizaki Y."/>
        </authorList>
    </citation>
    <scope>NUCLEOTIDE SEQUENCE [LARGE SCALE MRNA] (ISOFORM 2)</scope>
    <source>
        <strain>C57BL/6J</strain>
        <tissue>Heart</tissue>
    </source>
</reference>
<reference key="3">
    <citation type="journal article" date="2007" name="Proc. Natl. Acad. Sci. U.S.A.">
        <title>Large-scale phosphorylation analysis of mouse liver.</title>
        <authorList>
            <person name="Villen J."/>
            <person name="Beausoleil S.A."/>
            <person name="Gerber S.A."/>
            <person name="Gygi S.P."/>
        </authorList>
    </citation>
    <scope>IDENTIFICATION BY MASS SPECTROMETRY [LARGE SCALE ANALYSIS]</scope>
    <source>
        <tissue>Liver</tissue>
    </source>
</reference>
<reference key="4">
    <citation type="journal article" date="2010" name="Cell">
        <title>A tissue-specific atlas of mouse protein phosphorylation and expression.</title>
        <authorList>
            <person name="Huttlin E.L."/>
            <person name="Jedrychowski M.P."/>
            <person name="Elias J.E."/>
            <person name="Goswami T."/>
            <person name="Rad R."/>
            <person name="Beausoleil S.A."/>
            <person name="Villen J."/>
            <person name="Haas W."/>
            <person name="Sowa M.E."/>
            <person name="Gygi S.P."/>
        </authorList>
    </citation>
    <scope>PHOSPHORYLATION [LARGE SCALE ANALYSIS] AT THR-555</scope>
    <scope>IDENTIFICATION BY MASS SPECTROMETRY [LARGE SCALE ANALYSIS]</scope>
    <source>
        <tissue>Brown adipose tissue</tissue>
        <tissue>Heart</tissue>
        <tissue>Kidney</tissue>
        <tissue>Lung</tissue>
        <tissue>Spleen</tissue>
    </source>
</reference>
<reference key="5">
    <citation type="journal article" date="2012" name="Arterioscler. Thromb. Vasc. Biol.">
        <title>FGD5 mediates proangiogenic action of vascular endothelial growth factor in human vascular endothelial cells.</title>
        <authorList>
            <person name="Kurogane Y."/>
            <person name="Miyata M."/>
            <person name="Kubo Y."/>
            <person name="Nagamatsu Y."/>
            <person name="Kundu R.K."/>
            <person name="Uemura A."/>
            <person name="Ishida T."/>
            <person name="Quertermous T."/>
            <person name="Hirata K."/>
            <person name="Rikitake Y."/>
        </authorList>
    </citation>
    <scope>TISSUE SPECIFICITY</scope>
    <scope>DEVELOPMENTAL STAGE</scope>
</reference>
<proteinExistence type="evidence at protein level"/>
<gene>
    <name type="primary">Fgd5</name>
</gene>
<evidence type="ECO:0000250" key="1"/>
<evidence type="ECO:0000255" key="2">
    <source>
        <dbReference type="PROSITE-ProRule" id="PRU00062"/>
    </source>
</evidence>
<evidence type="ECO:0000255" key="3">
    <source>
        <dbReference type="PROSITE-ProRule" id="PRU00091"/>
    </source>
</evidence>
<evidence type="ECO:0000255" key="4">
    <source>
        <dbReference type="PROSITE-ProRule" id="PRU00145"/>
    </source>
</evidence>
<evidence type="ECO:0000256" key="5">
    <source>
        <dbReference type="SAM" id="MobiDB-lite"/>
    </source>
</evidence>
<evidence type="ECO:0000269" key="6">
    <source>
    </source>
</evidence>
<evidence type="ECO:0000303" key="7">
    <source>
    </source>
</evidence>
<evidence type="ECO:0007744" key="8">
    <source>
    </source>
</evidence>
<accession>Q80UZ0</accession>
<accession>Q8BHM5</accession>
<dbReference type="EMBL" id="BC042732">
    <property type="protein sequence ID" value="AAH42732.1"/>
    <property type="molecule type" value="mRNA"/>
</dbReference>
<dbReference type="EMBL" id="BC060664">
    <property type="status" value="NOT_ANNOTATED_CDS"/>
    <property type="molecule type" value="mRNA"/>
</dbReference>
<dbReference type="EMBL" id="AK049341">
    <property type="protein sequence ID" value="BAC33694.1"/>
    <property type="molecule type" value="mRNA"/>
</dbReference>
<dbReference type="EMBL" id="AK086031">
    <property type="protein sequence ID" value="BAC39597.1"/>
    <property type="molecule type" value="mRNA"/>
</dbReference>
<dbReference type="RefSeq" id="NP_766319.3">
    <property type="nucleotide sequence ID" value="NM_172731.3"/>
</dbReference>
<dbReference type="SMR" id="Q80UZ0"/>
<dbReference type="BioGRID" id="231234">
    <property type="interactions" value="1"/>
</dbReference>
<dbReference type="FunCoup" id="Q80UZ0">
    <property type="interactions" value="453"/>
</dbReference>
<dbReference type="IntAct" id="Q80UZ0">
    <property type="interactions" value="1"/>
</dbReference>
<dbReference type="STRING" id="10090.ENSMUSP00000086748"/>
<dbReference type="GlyGen" id="Q80UZ0">
    <property type="glycosylation" value="3 sites, 2 N-linked glycans (2 sites), 1 O-linked glycan (1 site)"/>
</dbReference>
<dbReference type="iPTMnet" id="Q80UZ0"/>
<dbReference type="PhosphoSitePlus" id="Q80UZ0"/>
<dbReference type="jPOST" id="Q80UZ0"/>
<dbReference type="PaxDb" id="10090-ENSMUSP00000086748"/>
<dbReference type="ProteomicsDB" id="271565">
    <molecule id="Q80UZ0-1"/>
</dbReference>
<dbReference type="ProteomicsDB" id="271566">
    <molecule id="Q80UZ0-2"/>
</dbReference>
<dbReference type="DNASU" id="232237"/>
<dbReference type="GeneID" id="232237"/>
<dbReference type="KEGG" id="mmu:232237"/>
<dbReference type="UCSC" id="uc009cyo.1">
    <molecule id="Q80UZ0-2"/>
    <property type="organism name" value="mouse"/>
</dbReference>
<dbReference type="AGR" id="MGI:2443369"/>
<dbReference type="CTD" id="152273"/>
<dbReference type="MGI" id="MGI:2443369">
    <property type="gene designation" value="Fgd5"/>
</dbReference>
<dbReference type="eggNOG" id="KOG1729">
    <property type="taxonomic scope" value="Eukaryota"/>
</dbReference>
<dbReference type="eggNOG" id="KOG3531">
    <property type="taxonomic scope" value="Eukaryota"/>
</dbReference>
<dbReference type="InParanoid" id="Q80UZ0"/>
<dbReference type="OrthoDB" id="245697at2759"/>
<dbReference type="PhylomeDB" id="Q80UZ0"/>
<dbReference type="Reactome" id="R-MMU-9013149">
    <property type="pathway name" value="RAC1 GTPase cycle"/>
</dbReference>
<dbReference type="BioGRID-ORCS" id="232237">
    <property type="hits" value="0 hits in 76 CRISPR screens"/>
</dbReference>
<dbReference type="ChiTaRS" id="Fgd5">
    <property type="organism name" value="mouse"/>
</dbReference>
<dbReference type="PRO" id="PR:Q80UZ0"/>
<dbReference type="Proteomes" id="UP000000589">
    <property type="component" value="Unplaced"/>
</dbReference>
<dbReference type="RNAct" id="Q80UZ0">
    <property type="molecule type" value="protein"/>
</dbReference>
<dbReference type="GO" id="GO:0005856">
    <property type="term" value="C:cytoskeleton"/>
    <property type="evidence" value="ECO:0007669"/>
    <property type="project" value="UniProtKB-SubCell"/>
</dbReference>
<dbReference type="GO" id="GO:0005769">
    <property type="term" value="C:early endosome"/>
    <property type="evidence" value="ECO:0007669"/>
    <property type="project" value="UniProtKB-SubCell"/>
</dbReference>
<dbReference type="GO" id="GO:0005783">
    <property type="term" value="C:endoplasmic reticulum"/>
    <property type="evidence" value="ECO:0007669"/>
    <property type="project" value="UniProtKB-SubCell"/>
</dbReference>
<dbReference type="GO" id="GO:0005794">
    <property type="term" value="C:Golgi apparatus"/>
    <property type="evidence" value="ECO:0007669"/>
    <property type="project" value="UniProtKB-SubCell"/>
</dbReference>
<dbReference type="GO" id="GO:0032587">
    <property type="term" value="C:ruffle membrane"/>
    <property type="evidence" value="ECO:0007669"/>
    <property type="project" value="UniProtKB-SubCell"/>
</dbReference>
<dbReference type="GO" id="GO:0005085">
    <property type="term" value="F:guanyl-nucleotide exchange factor activity"/>
    <property type="evidence" value="ECO:0007669"/>
    <property type="project" value="UniProtKB-KW"/>
</dbReference>
<dbReference type="GO" id="GO:0008270">
    <property type="term" value="F:zinc ion binding"/>
    <property type="evidence" value="ECO:0007669"/>
    <property type="project" value="UniProtKB-KW"/>
</dbReference>
<dbReference type="CDD" id="cd13237">
    <property type="entry name" value="PH2_FGD5_FGD6"/>
    <property type="match status" value="1"/>
</dbReference>
<dbReference type="Gene3D" id="1.20.900.10">
    <property type="entry name" value="Dbl homology (DH) domain"/>
    <property type="match status" value="1"/>
</dbReference>
<dbReference type="Gene3D" id="2.30.29.30">
    <property type="entry name" value="Pleckstrin-homology domain (PH domain)/Phosphotyrosine-binding domain (PTB)"/>
    <property type="match status" value="2"/>
</dbReference>
<dbReference type="Gene3D" id="3.30.40.10">
    <property type="entry name" value="Zinc/RING finger domain, C3HC4 (zinc finger)"/>
    <property type="match status" value="1"/>
</dbReference>
<dbReference type="InterPro" id="IPR035899">
    <property type="entry name" value="DBL_dom_sf"/>
</dbReference>
<dbReference type="InterPro" id="IPR000219">
    <property type="entry name" value="DH_dom"/>
</dbReference>
<dbReference type="InterPro" id="IPR051092">
    <property type="entry name" value="FYVE_RhoGEF_PH"/>
</dbReference>
<dbReference type="InterPro" id="IPR011993">
    <property type="entry name" value="PH-like_dom_sf"/>
</dbReference>
<dbReference type="InterPro" id="IPR001849">
    <property type="entry name" value="PH_domain"/>
</dbReference>
<dbReference type="InterPro" id="IPR000306">
    <property type="entry name" value="Znf_FYVE"/>
</dbReference>
<dbReference type="InterPro" id="IPR017455">
    <property type="entry name" value="Znf_FYVE-rel"/>
</dbReference>
<dbReference type="InterPro" id="IPR013083">
    <property type="entry name" value="Znf_RING/FYVE/PHD"/>
</dbReference>
<dbReference type="PANTHER" id="PTHR12673">
    <property type="entry name" value="FACIOGENITAL DYSPLASIA PROTEIN"/>
    <property type="match status" value="1"/>
</dbReference>
<dbReference type="PANTHER" id="PTHR12673:SF13">
    <property type="entry name" value="FYVE, RHOGEF AND PH DOMAIN-CONTAINING PROTEIN 5"/>
    <property type="match status" value="1"/>
</dbReference>
<dbReference type="Pfam" id="PF01363">
    <property type="entry name" value="FYVE"/>
    <property type="match status" value="1"/>
</dbReference>
<dbReference type="Pfam" id="PF00169">
    <property type="entry name" value="PH"/>
    <property type="match status" value="2"/>
</dbReference>
<dbReference type="Pfam" id="PF00621">
    <property type="entry name" value="RhoGEF"/>
    <property type="match status" value="1"/>
</dbReference>
<dbReference type="SMART" id="SM00064">
    <property type="entry name" value="FYVE"/>
    <property type="match status" value="1"/>
</dbReference>
<dbReference type="SMART" id="SM00233">
    <property type="entry name" value="PH"/>
    <property type="match status" value="2"/>
</dbReference>
<dbReference type="SMART" id="SM00325">
    <property type="entry name" value="RhoGEF"/>
    <property type="match status" value="1"/>
</dbReference>
<dbReference type="SUPFAM" id="SSF48065">
    <property type="entry name" value="DBL homology domain (DH-domain)"/>
    <property type="match status" value="1"/>
</dbReference>
<dbReference type="SUPFAM" id="SSF50729">
    <property type="entry name" value="PH domain-like"/>
    <property type="match status" value="2"/>
</dbReference>
<dbReference type="PROSITE" id="PS50010">
    <property type="entry name" value="DH_2"/>
    <property type="match status" value="1"/>
</dbReference>
<dbReference type="PROSITE" id="PS50003">
    <property type="entry name" value="PH_DOMAIN"/>
    <property type="match status" value="2"/>
</dbReference>
<dbReference type="PROSITE" id="PS50178">
    <property type="entry name" value="ZF_FYVE"/>
    <property type="match status" value="1"/>
</dbReference>
<organism>
    <name type="scientific">Mus musculus</name>
    <name type="common">Mouse</name>
    <dbReference type="NCBI Taxonomy" id="10090"/>
    <lineage>
        <taxon>Eukaryota</taxon>
        <taxon>Metazoa</taxon>
        <taxon>Chordata</taxon>
        <taxon>Craniata</taxon>
        <taxon>Vertebrata</taxon>
        <taxon>Euteleostomi</taxon>
        <taxon>Mammalia</taxon>
        <taxon>Eutheria</taxon>
        <taxon>Euarchontoglires</taxon>
        <taxon>Glires</taxon>
        <taxon>Rodentia</taxon>
        <taxon>Myomorpha</taxon>
        <taxon>Muroidea</taxon>
        <taxon>Muridae</taxon>
        <taxon>Murinae</taxon>
        <taxon>Mus</taxon>
        <taxon>Mus</taxon>
    </lineage>
</organism>
<name>FGD5_MOUSE</name>
<protein>
    <recommendedName>
        <fullName>FYVE, RhoGEF and PH domain-containing protein 5</fullName>
    </recommendedName>
</protein>
<feature type="chain" id="PRO_0000080951" description="FYVE, RhoGEF and PH domain-containing protein 5">
    <location>
        <begin position="1"/>
        <end position="1219"/>
    </location>
</feature>
<feature type="domain" description="DH" evidence="2">
    <location>
        <begin position="647"/>
        <end position="840"/>
    </location>
</feature>
<feature type="domain" description="PH 1" evidence="4">
    <location>
        <begin position="869"/>
        <end position="963"/>
    </location>
</feature>
<feature type="domain" description="PH 2" evidence="4">
    <location>
        <begin position="1120"/>
        <end position="1218"/>
    </location>
</feature>
<feature type="zinc finger region" description="FYVE-type" evidence="3">
    <location>
        <begin position="998"/>
        <end position="1057"/>
    </location>
</feature>
<feature type="region of interest" description="Disordered" evidence="5">
    <location>
        <begin position="1"/>
        <end position="85"/>
    </location>
</feature>
<feature type="region of interest" description="Disordered" evidence="5">
    <location>
        <begin position="94"/>
        <end position="113"/>
    </location>
</feature>
<feature type="region of interest" description="Disordered" evidence="5">
    <location>
        <begin position="201"/>
        <end position="227"/>
    </location>
</feature>
<feature type="region of interest" description="Disordered" evidence="5">
    <location>
        <begin position="310"/>
        <end position="367"/>
    </location>
</feature>
<feature type="region of interest" description="Disordered" evidence="5">
    <location>
        <begin position="586"/>
        <end position="644"/>
    </location>
</feature>
<feature type="compositionally biased region" description="Acidic residues" evidence="5">
    <location>
        <begin position="23"/>
        <end position="50"/>
    </location>
</feature>
<feature type="compositionally biased region" description="Polar residues" evidence="5">
    <location>
        <begin position="201"/>
        <end position="214"/>
    </location>
</feature>
<feature type="compositionally biased region" description="Basic and acidic residues" evidence="5">
    <location>
        <begin position="319"/>
        <end position="337"/>
    </location>
</feature>
<feature type="compositionally biased region" description="Polar residues" evidence="5">
    <location>
        <begin position="346"/>
        <end position="356"/>
    </location>
</feature>
<feature type="compositionally biased region" description="Low complexity" evidence="5">
    <location>
        <begin position="357"/>
        <end position="367"/>
    </location>
</feature>
<feature type="compositionally biased region" description="Low complexity" evidence="5">
    <location>
        <begin position="586"/>
        <end position="599"/>
    </location>
</feature>
<feature type="compositionally biased region" description="Acidic residues" evidence="5">
    <location>
        <begin position="618"/>
        <end position="630"/>
    </location>
</feature>
<feature type="compositionally biased region" description="Basic and acidic residues" evidence="5">
    <location>
        <begin position="631"/>
        <end position="644"/>
    </location>
</feature>
<feature type="binding site" evidence="3">
    <location>
        <position position="1004"/>
    </location>
    <ligand>
        <name>Zn(2+)</name>
        <dbReference type="ChEBI" id="CHEBI:29105"/>
        <label>1</label>
    </ligand>
</feature>
<feature type="binding site" evidence="3">
    <location>
        <position position="1007"/>
    </location>
    <ligand>
        <name>Zn(2+)</name>
        <dbReference type="ChEBI" id="CHEBI:29105"/>
        <label>1</label>
    </ligand>
</feature>
<feature type="binding site" evidence="3">
    <location>
        <position position="1020"/>
    </location>
    <ligand>
        <name>Zn(2+)</name>
        <dbReference type="ChEBI" id="CHEBI:29105"/>
        <label>2</label>
    </ligand>
</feature>
<feature type="binding site" evidence="3">
    <location>
        <position position="1023"/>
    </location>
    <ligand>
        <name>Zn(2+)</name>
        <dbReference type="ChEBI" id="CHEBI:29105"/>
        <label>2</label>
    </ligand>
</feature>
<feature type="binding site" evidence="3">
    <location>
        <position position="1028"/>
    </location>
    <ligand>
        <name>Zn(2+)</name>
        <dbReference type="ChEBI" id="CHEBI:29105"/>
        <label>1</label>
    </ligand>
</feature>
<feature type="binding site" evidence="3">
    <location>
        <position position="1031"/>
    </location>
    <ligand>
        <name>Zn(2+)</name>
        <dbReference type="ChEBI" id="CHEBI:29105"/>
        <label>1</label>
    </ligand>
</feature>
<feature type="binding site" evidence="3">
    <location>
        <position position="1049"/>
    </location>
    <ligand>
        <name>Zn(2+)</name>
        <dbReference type="ChEBI" id="CHEBI:29105"/>
        <label>2</label>
    </ligand>
</feature>
<feature type="binding site" evidence="3">
    <location>
        <position position="1052"/>
    </location>
    <ligand>
        <name>Zn(2+)</name>
        <dbReference type="ChEBI" id="CHEBI:29105"/>
        <label>2</label>
    </ligand>
</feature>
<feature type="modified residue" description="Phosphothreonine" evidence="8">
    <location>
        <position position="555"/>
    </location>
</feature>
<feature type="splice variant" id="VSP_013089" description="In isoform 2." evidence="7">
    <location>
        <begin position="1"/>
        <end position="1001"/>
    </location>
</feature>